<name>Y3427_MYCTU</name>
<organism>
    <name type="scientific">Mycobacterium tuberculosis (strain ATCC 25618 / H37Rv)</name>
    <dbReference type="NCBI Taxonomy" id="83332"/>
    <lineage>
        <taxon>Bacteria</taxon>
        <taxon>Bacillati</taxon>
        <taxon>Actinomycetota</taxon>
        <taxon>Actinomycetes</taxon>
        <taxon>Mycobacteriales</taxon>
        <taxon>Mycobacteriaceae</taxon>
        <taxon>Mycobacterium</taxon>
        <taxon>Mycobacterium tuberculosis complex</taxon>
    </lineage>
</organism>
<dbReference type="EMBL" id="HM053706">
    <property type="protein sequence ID" value="ADM62325.1"/>
    <property type="molecule type" value="Genomic_DNA"/>
</dbReference>
<dbReference type="EMBL" id="AL123456">
    <property type="protein sequence ID" value="CCP46249.1"/>
    <property type="molecule type" value="Genomic_DNA"/>
</dbReference>
<dbReference type="PIR" id="H70738">
    <property type="entry name" value="H70738"/>
</dbReference>
<dbReference type="RefSeq" id="NP_217944.1">
    <property type="nucleotide sequence ID" value="NC_000962.3"/>
</dbReference>
<dbReference type="SMR" id="Q50701"/>
<dbReference type="STRING" id="83332.Rv3427c"/>
<dbReference type="PaxDb" id="83332-Rv3427c"/>
<dbReference type="DNASU" id="887631"/>
<dbReference type="GeneID" id="887631"/>
<dbReference type="KEGG" id="mtu:Rv3427c"/>
<dbReference type="KEGG" id="mtv:RVBD_3427c"/>
<dbReference type="TubercuList" id="Rv3427c"/>
<dbReference type="eggNOG" id="COG1484">
    <property type="taxonomic scope" value="Bacteria"/>
</dbReference>
<dbReference type="InParanoid" id="Q50701"/>
<dbReference type="OrthoDB" id="9773429at2"/>
<dbReference type="PhylomeDB" id="Q50701"/>
<dbReference type="Proteomes" id="UP000001584">
    <property type="component" value="Chromosome"/>
</dbReference>
<dbReference type="GO" id="GO:0005886">
    <property type="term" value="C:plasma membrane"/>
    <property type="evidence" value="ECO:0007005"/>
    <property type="project" value="MTBBASE"/>
</dbReference>
<dbReference type="GO" id="GO:0005524">
    <property type="term" value="F:ATP binding"/>
    <property type="evidence" value="ECO:0007669"/>
    <property type="project" value="UniProtKB-KW"/>
</dbReference>
<dbReference type="GO" id="GO:0016887">
    <property type="term" value="F:ATP hydrolysis activity"/>
    <property type="evidence" value="ECO:0007669"/>
    <property type="project" value="InterPro"/>
</dbReference>
<dbReference type="GO" id="GO:0006260">
    <property type="term" value="P:DNA replication"/>
    <property type="evidence" value="ECO:0000318"/>
    <property type="project" value="GO_Central"/>
</dbReference>
<dbReference type="CDD" id="cd00009">
    <property type="entry name" value="AAA"/>
    <property type="match status" value="1"/>
</dbReference>
<dbReference type="FunFam" id="3.40.50.300:FF:003328">
    <property type="entry name" value="ISMt2 transposase B"/>
    <property type="match status" value="1"/>
</dbReference>
<dbReference type="Gene3D" id="3.40.50.300">
    <property type="entry name" value="P-loop containing nucleotide triphosphate hydrolases"/>
    <property type="match status" value="1"/>
</dbReference>
<dbReference type="InterPro" id="IPR003593">
    <property type="entry name" value="AAA+_ATPase"/>
</dbReference>
<dbReference type="InterPro" id="IPR028350">
    <property type="entry name" value="DNAC/IstB-like"/>
</dbReference>
<dbReference type="InterPro" id="IPR047661">
    <property type="entry name" value="IstB"/>
</dbReference>
<dbReference type="InterPro" id="IPR002611">
    <property type="entry name" value="IstB_ATP-bd"/>
</dbReference>
<dbReference type="InterPro" id="IPR027417">
    <property type="entry name" value="P-loop_NTPase"/>
</dbReference>
<dbReference type="NCBIfam" id="NF038214">
    <property type="entry name" value="IS21_help_AAA"/>
    <property type="match status" value="1"/>
</dbReference>
<dbReference type="PANTHER" id="PTHR30050:SF4">
    <property type="entry name" value="ATP-BINDING PROTEIN RV3427C IN INSERTION SEQUENCE-RELATED"/>
    <property type="match status" value="1"/>
</dbReference>
<dbReference type="PANTHER" id="PTHR30050">
    <property type="entry name" value="CHROMOSOMAL REPLICATION INITIATOR PROTEIN DNAA"/>
    <property type="match status" value="1"/>
</dbReference>
<dbReference type="Pfam" id="PF01695">
    <property type="entry name" value="IstB_IS21"/>
    <property type="match status" value="1"/>
</dbReference>
<dbReference type="PIRSF" id="PIRSF003073">
    <property type="entry name" value="DNAC_TnpB_IstB"/>
    <property type="match status" value="1"/>
</dbReference>
<dbReference type="SMART" id="SM00382">
    <property type="entry name" value="AAA"/>
    <property type="match status" value="1"/>
</dbReference>
<dbReference type="SUPFAM" id="SSF52540">
    <property type="entry name" value="P-loop containing nucleoside triphosphate hydrolases"/>
    <property type="match status" value="1"/>
</dbReference>
<protein>
    <recommendedName>
        <fullName>Putative ATP-binding protein Rv3427c in insertion sequence</fullName>
    </recommendedName>
</protein>
<comment type="miscellaneous">
    <text>Was identified as a high-confidence drug target.</text>
</comment>
<comment type="similarity">
    <text evidence="2">Belongs to the IS21/IS1162 putative ATP-binding protein family.</text>
</comment>
<accession>Q50701</accession>
<accession>E0YJK6</accession>
<reference key="1">
    <citation type="journal article" date="2010" name="J. Bacteriol.">
        <title>Massive gene duplication event among clinical isolates of the Mycobacterium tuberculosis W/Beijing family.</title>
        <authorList>
            <person name="Domenech P."/>
            <person name="Kolly G.S."/>
            <person name="Leon-Solis L."/>
            <person name="Fallow A."/>
            <person name="Reed M.B."/>
        </authorList>
    </citation>
    <scope>NUCLEOTIDE SEQUENCE [GENOMIC DNA]</scope>
    <source>
        <strain>G4B1.2</strain>
    </source>
</reference>
<reference key="2">
    <citation type="journal article" date="1998" name="Nature">
        <title>Deciphering the biology of Mycobacterium tuberculosis from the complete genome sequence.</title>
        <authorList>
            <person name="Cole S.T."/>
            <person name="Brosch R."/>
            <person name="Parkhill J."/>
            <person name="Garnier T."/>
            <person name="Churcher C.M."/>
            <person name="Harris D.E."/>
            <person name="Gordon S.V."/>
            <person name="Eiglmeier K."/>
            <person name="Gas S."/>
            <person name="Barry C.E. III"/>
            <person name="Tekaia F."/>
            <person name="Badcock K."/>
            <person name="Basham D."/>
            <person name="Brown D."/>
            <person name="Chillingworth T."/>
            <person name="Connor R."/>
            <person name="Davies R.M."/>
            <person name="Devlin K."/>
            <person name="Feltwell T."/>
            <person name="Gentles S."/>
            <person name="Hamlin N."/>
            <person name="Holroyd S."/>
            <person name="Hornsby T."/>
            <person name="Jagels K."/>
            <person name="Krogh A."/>
            <person name="McLean J."/>
            <person name="Moule S."/>
            <person name="Murphy L.D."/>
            <person name="Oliver S."/>
            <person name="Osborne J."/>
            <person name="Quail M.A."/>
            <person name="Rajandream M.A."/>
            <person name="Rogers J."/>
            <person name="Rutter S."/>
            <person name="Seeger K."/>
            <person name="Skelton S."/>
            <person name="Squares S."/>
            <person name="Squares R."/>
            <person name="Sulston J.E."/>
            <person name="Taylor K."/>
            <person name="Whitehead S."/>
            <person name="Barrell B.G."/>
        </authorList>
    </citation>
    <scope>NUCLEOTIDE SEQUENCE [LARGE SCALE GENOMIC DNA]</scope>
    <source>
        <strain>ATCC 25618 / H37Rv</strain>
    </source>
</reference>
<reference key="3">
    <citation type="journal article" date="2008" name="BMC Syst. Biol.">
        <title>targetTB: a target identification pipeline for Mycobacterium tuberculosis through an interactome, reactome and genome-scale structural analysis.</title>
        <authorList>
            <person name="Raman K."/>
            <person name="Yeturu K."/>
            <person name="Chandra N."/>
        </authorList>
    </citation>
    <scope>IDENTIFICATION AS A DRUG TARGET [LARGE SCALE ANALYSIS]</scope>
</reference>
<feature type="chain" id="PRO_0000075481" description="Putative ATP-binding protein Rv3427c in insertion sequence">
    <location>
        <begin position="1"/>
        <end position="251"/>
    </location>
</feature>
<feature type="binding site" evidence="1">
    <location>
        <begin position="108"/>
        <end position="115"/>
    </location>
    <ligand>
        <name>ATP</name>
        <dbReference type="ChEBI" id="CHEBI:30616"/>
    </ligand>
</feature>
<sequence>MSICDPALRNALRTLKLSGMLDTLDARLAQTRNGDLGHLEFLQALREDEIARRESAALTRRLRRAKFEAQATFEDFDFTANPKLPGAMLRDLAALRWLDAGESVILHGPVGVGKTHVAQALVHAVARRGGDVRFAKTSRMLSDLAGGHADRSWGQRIREYTKPLVLILDDFAMREHTAMHADDLYELISDRAITGKPLILTSNRAPNNWYGLFPNPVVAESLLDRLINTSHQILMDGPSYRPRKRPGRTTS</sequence>
<evidence type="ECO:0000255" key="1"/>
<evidence type="ECO:0000305" key="2"/>
<keyword id="KW-0067">ATP-binding</keyword>
<keyword id="KW-0547">Nucleotide-binding</keyword>
<keyword id="KW-1185">Reference proteome</keyword>
<keyword id="KW-0814">Transposable element</keyword>
<proteinExistence type="inferred from homology"/>
<gene>
    <name type="ordered locus">Rv3427c</name>
    <name type="ORF">MTCY78.02</name>
</gene>